<name>QTRT2_DROMO</name>
<keyword id="KW-0963">Cytoplasm</keyword>
<keyword id="KW-0479">Metal-binding</keyword>
<keyword id="KW-1185">Reference proteome</keyword>
<keyword id="KW-0819">tRNA processing</keyword>
<keyword id="KW-0862">Zinc</keyword>
<organism>
    <name type="scientific">Drosophila mojavensis</name>
    <name type="common">Fruit fly</name>
    <dbReference type="NCBI Taxonomy" id="7230"/>
    <lineage>
        <taxon>Eukaryota</taxon>
        <taxon>Metazoa</taxon>
        <taxon>Ecdysozoa</taxon>
        <taxon>Arthropoda</taxon>
        <taxon>Hexapoda</taxon>
        <taxon>Insecta</taxon>
        <taxon>Pterygota</taxon>
        <taxon>Neoptera</taxon>
        <taxon>Endopterygota</taxon>
        <taxon>Diptera</taxon>
        <taxon>Brachycera</taxon>
        <taxon>Muscomorpha</taxon>
        <taxon>Ephydroidea</taxon>
        <taxon>Drosophilidae</taxon>
        <taxon>Drosophila</taxon>
    </lineage>
</organism>
<feature type="chain" id="PRO_0000383937" description="Queuine tRNA-ribosyltransferase accessory subunit 2">
    <location>
        <begin position="1"/>
        <end position="416"/>
    </location>
</feature>
<feature type="binding site" evidence="1">
    <location>
        <position position="323"/>
    </location>
    <ligand>
        <name>Zn(2+)</name>
        <dbReference type="ChEBI" id="CHEBI:29105"/>
    </ligand>
</feature>
<feature type="binding site" evidence="1">
    <location>
        <position position="325"/>
    </location>
    <ligand>
        <name>Zn(2+)</name>
        <dbReference type="ChEBI" id="CHEBI:29105"/>
    </ligand>
</feature>
<feature type="binding site" evidence="1">
    <location>
        <position position="328"/>
    </location>
    <ligand>
        <name>Zn(2+)</name>
        <dbReference type="ChEBI" id="CHEBI:29105"/>
    </ligand>
</feature>
<feature type="binding site" evidence="1">
    <location>
        <position position="354"/>
    </location>
    <ligand>
        <name>Zn(2+)</name>
        <dbReference type="ChEBI" id="CHEBI:29105"/>
    </ligand>
</feature>
<sequence length="416" mass="47104">MKFIIKSISKNSGRLGQLRIKDSKELQTPLLLQTTKGGSIPYLSADVFGMVTQEQQVLQLTLCTMDQMAESLAQWNRSLGAYVGYPEYNTLLLLRDPCEATPTGGNDRDVVPLFTRRGKESLTAERYLQLVSSFAPDVYQGLCDADTNPESTKKRVQKSVDRTERFMEHCYKQHRELDRLKDSTLLAPIVGGYNTYARTQSIKHAREQPKGSYGGYIFEGFHTNGLPATRLSPSQLLPIVEHCVQQIEEELPRLMPGPLTPVLMLELIRLGIDIFDTSYAYCAAVNYKALTFSYTIDKEEHSAFLDVTDEAIREEFKPMLEGCKCLACQKHTRAYVHHLYKTNELLGPILLMIHNLHHYMGFFDVIRQSIAMDQLSLLLDYVRRQNMPNDVNYCIEPNTKVVGKAAMGKGFITAAN</sequence>
<evidence type="ECO:0000255" key="1">
    <source>
        <dbReference type="HAMAP-Rule" id="MF_03043"/>
    </source>
</evidence>
<protein>
    <recommendedName>
        <fullName evidence="1">Queuine tRNA-ribosyltransferase accessory subunit 2</fullName>
    </recommendedName>
    <alternativeName>
        <fullName evidence="1">Queuine tRNA-ribosyltransferase domain-containing protein 1</fullName>
    </alternativeName>
</protein>
<reference key="1">
    <citation type="journal article" date="2007" name="Nature">
        <title>Evolution of genes and genomes on the Drosophila phylogeny.</title>
        <authorList>
            <consortium name="Drosophila 12 genomes consortium"/>
        </authorList>
    </citation>
    <scope>NUCLEOTIDE SEQUENCE [LARGE SCALE GENOMIC DNA]</scope>
    <source>
        <strain>Tucson 15081-1352.22</strain>
    </source>
</reference>
<proteinExistence type="inferred from homology"/>
<gene>
    <name type="ORF">GI13356</name>
</gene>
<dbReference type="EMBL" id="CH933809">
    <property type="protein sequence ID" value="EDW18674.1"/>
    <property type="molecule type" value="Genomic_DNA"/>
</dbReference>
<dbReference type="SMR" id="B4KXI8"/>
<dbReference type="FunCoup" id="B4KXI8">
    <property type="interactions" value="1508"/>
</dbReference>
<dbReference type="EnsemblMetazoa" id="FBtr0164081">
    <property type="protein sequence ID" value="FBpp0162573"/>
    <property type="gene ID" value="FBgn0136113"/>
</dbReference>
<dbReference type="EnsemblMetazoa" id="XM_002008162.4">
    <property type="protein sequence ID" value="XP_002008198.1"/>
    <property type="gene ID" value="LOC6582497"/>
</dbReference>
<dbReference type="GeneID" id="6582497"/>
<dbReference type="KEGG" id="dmo:Dmoj_GI13356"/>
<dbReference type="eggNOG" id="KOG3909">
    <property type="taxonomic scope" value="Eukaryota"/>
</dbReference>
<dbReference type="HOGENOM" id="CLU_037350_0_0_1"/>
<dbReference type="InParanoid" id="B4KXI8"/>
<dbReference type="OMA" id="VPHIAHD"/>
<dbReference type="OrthoDB" id="27601at2759"/>
<dbReference type="PhylomeDB" id="B4KXI8"/>
<dbReference type="Proteomes" id="UP000009192">
    <property type="component" value="Unassembled WGS sequence"/>
</dbReference>
<dbReference type="GO" id="GO:0005737">
    <property type="term" value="C:cytoplasm"/>
    <property type="evidence" value="ECO:0007669"/>
    <property type="project" value="UniProtKB-SubCell"/>
</dbReference>
<dbReference type="GO" id="GO:0046872">
    <property type="term" value="F:metal ion binding"/>
    <property type="evidence" value="ECO:0007669"/>
    <property type="project" value="UniProtKB-KW"/>
</dbReference>
<dbReference type="GO" id="GO:0008479">
    <property type="term" value="F:tRNA-guanosine(34) queuine transglycosylase activity"/>
    <property type="evidence" value="ECO:0007669"/>
    <property type="project" value="UniProtKB-UniRule"/>
</dbReference>
<dbReference type="GO" id="GO:0101030">
    <property type="term" value="P:tRNA-guanine transglycosylation"/>
    <property type="evidence" value="ECO:0007669"/>
    <property type="project" value="UniProtKB-UniRule"/>
</dbReference>
<dbReference type="Gene3D" id="3.20.20.105">
    <property type="entry name" value="Queuine tRNA-ribosyltransferase-like"/>
    <property type="match status" value="1"/>
</dbReference>
<dbReference type="HAMAP" id="MF_03043">
    <property type="entry name" value="QTRT2"/>
    <property type="match status" value="1"/>
</dbReference>
<dbReference type="InterPro" id="IPR028592">
    <property type="entry name" value="QTRTD1"/>
</dbReference>
<dbReference type="InterPro" id="IPR050852">
    <property type="entry name" value="Queuine_tRNA-ribosyltrfase"/>
</dbReference>
<dbReference type="InterPro" id="IPR036511">
    <property type="entry name" value="TGT-like_sf"/>
</dbReference>
<dbReference type="InterPro" id="IPR002616">
    <property type="entry name" value="tRNA_ribo_trans-like"/>
</dbReference>
<dbReference type="NCBIfam" id="TIGR00449">
    <property type="entry name" value="tgt_general"/>
    <property type="match status" value="1"/>
</dbReference>
<dbReference type="PANTHER" id="PTHR46064">
    <property type="entry name" value="QUEUINE TRNA-RIBOSYLTRANSFERASE ACCESSORY SUBUNIT 2"/>
    <property type="match status" value="1"/>
</dbReference>
<dbReference type="PANTHER" id="PTHR46064:SF1">
    <property type="entry name" value="QUEUINE TRNA-RIBOSYLTRANSFERASE ACCESSORY SUBUNIT 2"/>
    <property type="match status" value="1"/>
</dbReference>
<dbReference type="Pfam" id="PF01702">
    <property type="entry name" value="TGT"/>
    <property type="match status" value="1"/>
</dbReference>
<dbReference type="SUPFAM" id="SSF51713">
    <property type="entry name" value="tRNA-guanine transglycosylase"/>
    <property type="match status" value="1"/>
</dbReference>
<accession>B4KXI8</accession>
<comment type="function">
    <text evidence="1">Non-catalytic subunit of the queuine tRNA-ribosyltransferase (TGT) that catalyzes the base-exchange of a guanine (G) residue with queuine (Q) at position 34 (anticodon wobble position) in tRNAs with GU(N) anticodons (tRNA-Asp, -Asn, -His and -Tyr), resulting in the hypermodified nucleoside queuosine (7-(((4,5-cis-dihydroxy-2-cyclopenten-1-yl)amino)methyl)-7-deazaguanosine).</text>
</comment>
<comment type="cofactor">
    <cofactor evidence="1">
        <name>Zn(2+)</name>
        <dbReference type="ChEBI" id="CHEBI:29105"/>
    </cofactor>
    <text evidence="1">Binds 1 zinc ion per subunit.</text>
</comment>
<comment type="subunit">
    <text evidence="1">Heterodimer of a catalytic subunit and an accessory subunit.</text>
</comment>
<comment type="subcellular location">
    <subcellularLocation>
        <location evidence="1">Cytoplasm</location>
    </subcellularLocation>
</comment>
<comment type="similarity">
    <text evidence="1">Belongs to the queuine tRNA-ribosyltransferase family. QTRT2 subfamily.</text>
</comment>